<organism>
    <name type="scientific">Rattus norvegicus</name>
    <name type="common">Rat</name>
    <dbReference type="NCBI Taxonomy" id="10116"/>
    <lineage>
        <taxon>Eukaryota</taxon>
        <taxon>Metazoa</taxon>
        <taxon>Chordata</taxon>
        <taxon>Craniata</taxon>
        <taxon>Vertebrata</taxon>
        <taxon>Euteleostomi</taxon>
        <taxon>Mammalia</taxon>
        <taxon>Eutheria</taxon>
        <taxon>Euarchontoglires</taxon>
        <taxon>Glires</taxon>
        <taxon>Rodentia</taxon>
        <taxon>Myomorpha</taxon>
        <taxon>Muroidea</taxon>
        <taxon>Muridae</taxon>
        <taxon>Murinae</taxon>
        <taxon>Rattus</taxon>
    </lineage>
</organism>
<sequence length="876" mass="101587">MVKEKKKADKKGDKSARSPSSISDNPEAAKQEISASKQEVAPSAVIPVLETPLKQTPKRDSEHTYQSEDETQYEEPILTKLIVESYEGEKVRGLYEGEGFAVFQGGNTYHGMFSEGLMHGQGTYIWADGLKYEGDFVKNIPMNHGVYTWPDGSTYEGEVVNGMRNGFGMFKCGTQPVSYIGHWCHGKRHGKGSIYYNQEGTSWYEGDWVYNIKKGWGIRCYKSGNIYEGQWENNMRHGEGRMRWLTTNEEYTGHWEKGIQNGFGTHTWFLKRIPNSQYPLRNEYIGAFVNGFRHGQGKFYYASGAMYEGEWVSNKKQGRGRITFKNGRVYEGLFSNDHIAQFFEAEMDYSYSLDRRSDISQRSRQARGSSVSADREPETLRKLDGSESRSVLGSSIELDLNLLLDMYPEESQEEEKKQVEYAVLRNITELRRIYCFYSGLGCDHSLDNTFLMTKLHFWRFLKDCRFHHHNITLADMDRVLSVYNGIPIEEIHSPFRTILLRTFLNYLLQLAYYIHHKEFQNRSPSLFLCFTKLMAENIHPHACQVKGHLFNEQQRTLYSMNYIDKCWEIYTAYCRPNEAPPYELTMKMRYFLWMLKDFRMINKELTATKFMRVIAEDNPFVYDGMDSNFELELVFLEFFEALLCFSLCCMFDQMTRSYLKAPYDDVTTNRYGSTQTVLNQSIHRSPSGATSHDSEVHFSSTKSSLDKIGVLPDGKIRQSEPKLKKSLSEDKVSKMNLKAQGRGLVFMSPHGEKYEKSKDEQKEKLNMWVNNLYVFFVSVLFSAYKHEEALKEKVEENRLQEAVLAQQKQIENEELEARLNILREEEARRQDFELDITVLKEPPEVPAVQPLTPSPPKEDLVSMQTSKASPGKKKKK</sequence>
<dbReference type="EMBL" id="BC081935">
    <property type="protein sequence ID" value="AAH81935.1"/>
    <property type="molecule type" value="mRNA"/>
</dbReference>
<dbReference type="RefSeq" id="NP_001013889.1">
    <property type="nucleotide sequence ID" value="NM_001013867.1"/>
</dbReference>
<dbReference type="RefSeq" id="NP_001420366.1">
    <property type="nucleotide sequence ID" value="NM_001433437.1"/>
</dbReference>
<dbReference type="RefSeq" id="XP_006248923.1">
    <property type="nucleotide sequence ID" value="XM_006248861.3"/>
</dbReference>
<dbReference type="RefSeq" id="XP_063127205.1">
    <property type="nucleotide sequence ID" value="XM_063271135.1"/>
</dbReference>
<dbReference type="SMR" id="Q66HB5"/>
<dbReference type="FunCoup" id="Q66HB5">
    <property type="interactions" value="30"/>
</dbReference>
<dbReference type="STRING" id="10116.ENSRNOP00000037688"/>
<dbReference type="PhosphoSitePlus" id="Q66HB5"/>
<dbReference type="PaxDb" id="10116-ENSRNOP00000037688"/>
<dbReference type="Ensembl" id="ENSRNOT00000034483.7">
    <property type="protein sequence ID" value="ENSRNOP00000037688.5"/>
    <property type="gene ID" value="ENSRNOG00000001036.8"/>
</dbReference>
<dbReference type="GeneID" id="288478"/>
<dbReference type="KEGG" id="rno:288478"/>
<dbReference type="AGR" id="RGD:1311893"/>
<dbReference type="CTD" id="222967"/>
<dbReference type="RGD" id="1311893">
    <property type="gene designation" value="Rsph10b"/>
</dbReference>
<dbReference type="eggNOG" id="KOG0231">
    <property type="taxonomic scope" value="Eukaryota"/>
</dbReference>
<dbReference type="GeneTree" id="ENSGT00940000159899"/>
<dbReference type="HOGENOM" id="CLU_012108_1_0_1"/>
<dbReference type="InParanoid" id="Q66HB5"/>
<dbReference type="OMA" id="PNACHVK"/>
<dbReference type="PhylomeDB" id="Q66HB5"/>
<dbReference type="PRO" id="PR:Q66HB5"/>
<dbReference type="Proteomes" id="UP000002494">
    <property type="component" value="Chromosome 12"/>
</dbReference>
<dbReference type="Bgee" id="ENSRNOG00000001036">
    <property type="expression patterns" value="Expressed in testis and 6 other cell types or tissues"/>
</dbReference>
<dbReference type="GO" id="GO:0097729">
    <property type="term" value="C:9+2 motile cilium"/>
    <property type="evidence" value="ECO:0000250"/>
    <property type="project" value="UniProtKB"/>
</dbReference>
<dbReference type="GO" id="GO:0005930">
    <property type="term" value="C:axoneme"/>
    <property type="evidence" value="ECO:0007669"/>
    <property type="project" value="Ensembl"/>
</dbReference>
<dbReference type="GO" id="GO:0005929">
    <property type="term" value="C:cilium"/>
    <property type="evidence" value="ECO:0000250"/>
    <property type="project" value="UniProtKB"/>
</dbReference>
<dbReference type="GO" id="GO:0036126">
    <property type="term" value="C:sperm flagellum"/>
    <property type="evidence" value="ECO:0000250"/>
    <property type="project" value="UniProtKB"/>
</dbReference>
<dbReference type="Gene3D" id="2.20.110.10">
    <property type="entry name" value="Histone H3 K4-specific methyltransferase SET7/9 N-terminal domain"/>
    <property type="match status" value="4"/>
</dbReference>
<dbReference type="InterPro" id="IPR003409">
    <property type="entry name" value="MORN"/>
</dbReference>
<dbReference type="PANTHER" id="PTHR46613">
    <property type="entry name" value="RADIAL SPOKE HEAD 10 HOMOLOG B-RELATED"/>
    <property type="match status" value="1"/>
</dbReference>
<dbReference type="PANTHER" id="PTHR46613:SF1">
    <property type="entry name" value="RADIAL SPOKE HEAD 10 HOMOLOG B-RELATED"/>
    <property type="match status" value="1"/>
</dbReference>
<dbReference type="Pfam" id="PF02493">
    <property type="entry name" value="MORN"/>
    <property type="match status" value="10"/>
</dbReference>
<dbReference type="SMART" id="SM00698">
    <property type="entry name" value="MORN"/>
    <property type="match status" value="9"/>
</dbReference>
<dbReference type="SUPFAM" id="SSF82185">
    <property type="entry name" value="Histone H3 K4-specific methyltransferase SET7/9 N-terminal domain"/>
    <property type="match status" value="3"/>
</dbReference>
<accession>Q66HB5</accession>
<reference key="1">
    <citation type="journal article" date="2004" name="Genome Res.">
        <title>The status, quality, and expansion of the NIH full-length cDNA project: the Mammalian Gene Collection (MGC).</title>
        <authorList>
            <consortium name="The MGC Project Team"/>
        </authorList>
    </citation>
    <scope>NUCLEOTIDE SEQUENCE [LARGE SCALE MRNA]</scope>
    <source>
        <tissue>Testis</tissue>
    </source>
</reference>
<protein>
    <recommendedName>
        <fullName>Radial spoke head 10 homolog B</fullName>
    </recommendedName>
</protein>
<feature type="chain" id="PRO_0000311944" description="Radial spoke head 10 homolog B">
    <location>
        <begin position="1"/>
        <end position="876"/>
    </location>
</feature>
<feature type="repeat" description="MORN 1">
    <location>
        <begin position="86"/>
        <end position="108"/>
    </location>
</feature>
<feature type="repeat" description="MORN 2">
    <location>
        <begin position="109"/>
        <end position="131"/>
    </location>
</feature>
<feature type="repeat" description="MORN 3">
    <location>
        <begin position="132"/>
        <end position="154"/>
    </location>
</feature>
<feature type="repeat" description="MORN 4">
    <location>
        <begin position="155"/>
        <end position="177"/>
    </location>
</feature>
<feature type="repeat" description="MORN 5">
    <location>
        <begin position="179"/>
        <end position="201"/>
    </location>
</feature>
<feature type="repeat" description="MORN 6">
    <location>
        <begin position="204"/>
        <end position="226"/>
    </location>
</feature>
<feature type="repeat" description="MORN 7">
    <location>
        <begin position="227"/>
        <end position="249"/>
    </location>
</feature>
<feature type="repeat" description="MORN 8">
    <location>
        <begin position="251"/>
        <end position="273"/>
    </location>
</feature>
<feature type="repeat" description="MORN 9">
    <location>
        <begin position="284"/>
        <end position="306"/>
    </location>
</feature>
<feature type="repeat" description="MORN 10">
    <location>
        <begin position="307"/>
        <end position="329"/>
    </location>
</feature>
<feature type="region of interest" description="Disordered" evidence="4">
    <location>
        <begin position="1"/>
        <end position="72"/>
    </location>
</feature>
<feature type="region of interest" description="Disordered" evidence="4">
    <location>
        <begin position="360"/>
        <end position="386"/>
    </location>
</feature>
<feature type="region of interest" description="Disordered" evidence="4">
    <location>
        <begin position="841"/>
        <end position="876"/>
    </location>
</feature>
<feature type="coiled-coil region" evidence="3">
    <location>
        <begin position="752"/>
        <end position="841"/>
    </location>
</feature>
<feature type="compositionally biased region" description="Basic and acidic residues" evidence="4">
    <location>
        <begin position="1"/>
        <end position="16"/>
    </location>
</feature>
<feature type="compositionally biased region" description="Basic and acidic residues" evidence="4">
    <location>
        <begin position="57"/>
        <end position="66"/>
    </location>
</feature>
<feature type="compositionally biased region" description="Basic and acidic residues" evidence="4">
    <location>
        <begin position="373"/>
        <end position="386"/>
    </location>
</feature>
<comment type="function">
    <text evidence="1">May function as part of the axonemal radial spoke complex 3 (RS3). Radial spoke complexes are important for ciliary motility.</text>
</comment>
<comment type="subunit">
    <text evidence="1">Interacts with RSPH6A. Does not appear to be part of the axonemal radial spoke complexes 1 or 2.</text>
</comment>
<comment type="subcellular location">
    <subcellularLocation>
        <location evidence="1">Cytoplasm</location>
        <location evidence="1">Cytoskeleton</location>
        <location evidence="1">Cilium axoneme</location>
    </subcellularLocation>
    <subcellularLocation>
        <location evidence="2">Cell projection</location>
        <location evidence="2">Cilium</location>
    </subcellularLocation>
    <subcellularLocation>
        <location evidence="2">Cell projection</location>
        <location evidence="2">Cilium</location>
        <location evidence="2">Flagellum</location>
    </subcellularLocation>
</comment>
<evidence type="ECO:0000250" key="1">
    <source>
        <dbReference type="UniProtKB" id="E9PYQ0"/>
    </source>
</evidence>
<evidence type="ECO:0000250" key="2">
    <source>
        <dbReference type="UniProtKB" id="P0C881"/>
    </source>
</evidence>
<evidence type="ECO:0000255" key="3"/>
<evidence type="ECO:0000256" key="4">
    <source>
        <dbReference type="SAM" id="MobiDB-lite"/>
    </source>
</evidence>
<proteinExistence type="evidence at transcript level"/>
<gene>
    <name type="primary">Rsph10b</name>
</gene>
<name>RS10B_RAT</name>
<keyword id="KW-0966">Cell projection</keyword>
<keyword id="KW-0969">Cilium</keyword>
<keyword id="KW-0175">Coiled coil</keyword>
<keyword id="KW-0963">Cytoplasm</keyword>
<keyword id="KW-0206">Cytoskeleton</keyword>
<keyword id="KW-0282">Flagellum</keyword>
<keyword id="KW-1185">Reference proteome</keyword>
<keyword id="KW-0677">Repeat</keyword>